<reference key="1">
    <citation type="submission" date="2005-09" db="EMBL/GenBank/DDBJ databases">
        <authorList>
            <consortium name="NIH - Mammalian Gene Collection (MGC) project"/>
        </authorList>
    </citation>
    <scope>NUCLEOTIDE SEQUENCE [LARGE SCALE MRNA]</scope>
    <source>
        <strain>Hereford</strain>
        <tissue>Uterus</tissue>
    </source>
</reference>
<sequence length="218" mass="25017">MNCRSEVLEVSVEGRQVEEAMLAVLHTVLLHRSTGKFHYKKEGTYSIGTVGTQDVDCDFIDFTYVRVSSEELDRALRKVVGEFRDALRNSGGDGLGQMSLEFYQKKKSRWPFSDECIPWEVWTVKVHVVALATEQERQICREKVGEKLCEKIINIVEVMNRHEYLPKMPTQSEVDNVFDTGLRDVQPYLYKISFQITDALGSSVTTTMRRLIKDTLAL</sequence>
<feature type="chain" id="PRO_0000294321" description="Autophagy-related protein 101">
    <location>
        <begin position="1"/>
        <end position="218"/>
    </location>
</feature>
<feature type="region of interest" description="Important for interaction with ATG13" evidence="1">
    <location>
        <begin position="152"/>
        <end position="156"/>
    </location>
</feature>
<gene>
    <name type="primary">ATG101</name>
</gene>
<dbReference type="EMBL" id="BC105530">
    <property type="protein sequence ID" value="AAI05531.1"/>
    <property type="molecule type" value="mRNA"/>
</dbReference>
<dbReference type="RefSeq" id="NP_001039599.1">
    <property type="nucleotide sequence ID" value="NM_001046134.1"/>
</dbReference>
<dbReference type="RefSeq" id="XP_005206266.1">
    <property type="nucleotide sequence ID" value="XM_005206209.3"/>
</dbReference>
<dbReference type="RefSeq" id="XP_005206267.1">
    <property type="nucleotide sequence ID" value="XM_005206210.5"/>
</dbReference>
<dbReference type="SMR" id="Q2HJE0"/>
<dbReference type="FunCoup" id="Q2HJE0">
    <property type="interactions" value="2611"/>
</dbReference>
<dbReference type="STRING" id="9913.ENSBTAP00000000651"/>
<dbReference type="PaxDb" id="9913-ENSBTAP00000000651"/>
<dbReference type="Ensembl" id="ENSBTAT00000000651.4">
    <property type="protein sequence ID" value="ENSBTAP00000000651.2"/>
    <property type="gene ID" value="ENSBTAG00000000510.5"/>
</dbReference>
<dbReference type="GeneID" id="513049"/>
<dbReference type="KEGG" id="bta:513049"/>
<dbReference type="CTD" id="60673"/>
<dbReference type="VEuPathDB" id="HostDB:ENSBTAG00000000510"/>
<dbReference type="VGNC" id="VGNC:26249">
    <property type="gene designation" value="ATG101"/>
</dbReference>
<dbReference type="eggNOG" id="KOG4493">
    <property type="taxonomic scope" value="Eukaryota"/>
</dbReference>
<dbReference type="GeneTree" id="ENSGT00390000016511"/>
<dbReference type="HOGENOM" id="CLU_110397_0_0_1"/>
<dbReference type="InParanoid" id="Q2HJE0"/>
<dbReference type="OMA" id="TMNCRSE"/>
<dbReference type="OrthoDB" id="10259639at2759"/>
<dbReference type="TreeFam" id="TF320996"/>
<dbReference type="Reactome" id="R-BTA-1632852">
    <property type="pathway name" value="Macroautophagy"/>
</dbReference>
<dbReference type="Proteomes" id="UP000009136">
    <property type="component" value="Chromosome 5"/>
</dbReference>
<dbReference type="Bgee" id="ENSBTAG00000000510">
    <property type="expression patterns" value="Expressed in ureter and 105 other cell types or tissues"/>
</dbReference>
<dbReference type="GO" id="GO:1990316">
    <property type="term" value="C:Atg1/ULK1 kinase complex"/>
    <property type="evidence" value="ECO:0000318"/>
    <property type="project" value="GO_Central"/>
</dbReference>
<dbReference type="GO" id="GO:0000407">
    <property type="term" value="C:phagophore assembly site"/>
    <property type="evidence" value="ECO:0000318"/>
    <property type="project" value="GO_Central"/>
</dbReference>
<dbReference type="GO" id="GO:0042802">
    <property type="term" value="F:identical protein binding"/>
    <property type="evidence" value="ECO:0007669"/>
    <property type="project" value="Ensembl"/>
</dbReference>
<dbReference type="GO" id="GO:0019901">
    <property type="term" value="F:protein kinase binding"/>
    <property type="evidence" value="ECO:0000318"/>
    <property type="project" value="GO_Central"/>
</dbReference>
<dbReference type="GO" id="GO:0044877">
    <property type="term" value="F:protein-containing complex binding"/>
    <property type="evidence" value="ECO:0007669"/>
    <property type="project" value="Ensembl"/>
</dbReference>
<dbReference type="GO" id="GO:0000045">
    <property type="term" value="P:autophagosome assembly"/>
    <property type="evidence" value="ECO:0000318"/>
    <property type="project" value="GO_Central"/>
</dbReference>
<dbReference type="GO" id="GO:0008285">
    <property type="term" value="P:negative regulation of cell population proliferation"/>
    <property type="evidence" value="ECO:0007669"/>
    <property type="project" value="Ensembl"/>
</dbReference>
<dbReference type="GO" id="GO:0010508">
    <property type="term" value="P:positive regulation of autophagy"/>
    <property type="evidence" value="ECO:0007669"/>
    <property type="project" value="Ensembl"/>
</dbReference>
<dbReference type="InterPro" id="IPR012445">
    <property type="entry name" value="ATG101"/>
</dbReference>
<dbReference type="PANTHER" id="PTHR13292">
    <property type="entry name" value="AUTOPHAGY-RELATED PROTEIN 101"/>
    <property type="match status" value="1"/>
</dbReference>
<dbReference type="PANTHER" id="PTHR13292:SF0">
    <property type="entry name" value="AUTOPHAGY-RELATED PROTEIN 101"/>
    <property type="match status" value="1"/>
</dbReference>
<dbReference type="Pfam" id="PF07855">
    <property type="entry name" value="ATG101"/>
    <property type="match status" value="1"/>
</dbReference>
<organism>
    <name type="scientific">Bos taurus</name>
    <name type="common">Bovine</name>
    <dbReference type="NCBI Taxonomy" id="9913"/>
    <lineage>
        <taxon>Eukaryota</taxon>
        <taxon>Metazoa</taxon>
        <taxon>Chordata</taxon>
        <taxon>Craniata</taxon>
        <taxon>Vertebrata</taxon>
        <taxon>Euteleostomi</taxon>
        <taxon>Mammalia</taxon>
        <taxon>Eutheria</taxon>
        <taxon>Laurasiatheria</taxon>
        <taxon>Artiodactyla</taxon>
        <taxon>Ruminantia</taxon>
        <taxon>Pecora</taxon>
        <taxon>Bovidae</taxon>
        <taxon>Bovinae</taxon>
        <taxon>Bos</taxon>
    </lineage>
</organism>
<comment type="function">
    <text evidence="1">Autophagy factor required for autophagosome formation. Stabilizes ATG13, protecting it from proteasomal degradation.</text>
</comment>
<comment type="subunit">
    <text evidence="1">Interacts with ATG13. Associates with a complex composed of ATG13, ULK1 and RB1CC1; the association with this complex requires the presence of ATG13.</text>
</comment>
<comment type="subcellular location">
    <subcellularLocation>
        <location evidence="1">Cytoplasm</location>
    </subcellularLocation>
    <subcellularLocation>
        <location evidence="1">Preautophagosomal structure</location>
    </subcellularLocation>
    <text evidence="1">Under starvation conditions, it is localized to puncate structures primarily representing the isolation membrane; the isolation membrane sequesters a portion of the cytoplasm resulting in autophagosome formation.</text>
</comment>
<comment type="similarity">
    <text evidence="2">Belongs to the ATG101 family.</text>
</comment>
<keyword id="KW-0072">Autophagy</keyword>
<keyword id="KW-0963">Cytoplasm</keyword>
<keyword id="KW-1185">Reference proteome</keyword>
<name>ATGA1_BOVIN</name>
<accession>Q2HJE0</accession>
<evidence type="ECO:0000250" key="1">
    <source>
        <dbReference type="UniProtKB" id="Q9BSB4"/>
    </source>
</evidence>
<evidence type="ECO:0000305" key="2"/>
<protein>
    <recommendedName>
        <fullName>Autophagy-related protein 101</fullName>
    </recommendedName>
</protein>
<proteinExistence type="evidence at transcript level"/>